<reference key="1">
    <citation type="journal article" date="2003" name="Proc. Natl. Acad. Sci. U.S.A.">
        <title>The complete genome sequence of the Arabidopsis and tomato pathogen Pseudomonas syringae pv. tomato DC3000.</title>
        <authorList>
            <person name="Buell C.R."/>
            <person name="Joardar V."/>
            <person name="Lindeberg M."/>
            <person name="Selengut J."/>
            <person name="Paulsen I.T."/>
            <person name="Gwinn M.L."/>
            <person name="Dodson R.J."/>
            <person name="DeBoy R.T."/>
            <person name="Durkin A.S."/>
            <person name="Kolonay J.F."/>
            <person name="Madupu R."/>
            <person name="Daugherty S.C."/>
            <person name="Brinkac L.M."/>
            <person name="Beanan M.J."/>
            <person name="Haft D.H."/>
            <person name="Nelson W.C."/>
            <person name="Davidsen T.M."/>
            <person name="Zafar N."/>
            <person name="Zhou L."/>
            <person name="Liu J."/>
            <person name="Yuan Q."/>
            <person name="Khouri H.M."/>
            <person name="Fedorova N.B."/>
            <person name="Tran B."/>
            <person name="Russell D."/>
            <person name="Berry K.J."/>
            <person name="Utterback T.R."/>
            <person name="Van Aken S.E."/>
            <person name="Feldblyum T.V."/>
            <person name="D'Ascenzo M."/>
            <person name="Deng W.-L."/>
            <person name="Ramos A.R."/>
            <person name="Alfano J.R."/>
            <person name="Cartinhour S."/>
            <person name="Chatterjee A.K."/>
            <person name="Delaney T.P."/>
            <person name="Lazarowitz S.G."/>
            <person name="Martin G.B."/>
            <person name="Schneider D.J."/>
            <person name="Tang X."/>
            <person name="Bender C.L."/>
            <person name="White O."/>
            <person name="Fraser C.M."/>
            <person name="Collmer A."/>
        </authorList>
    </citation>
    <scope>NUCLEOTIDE SEQUENCE [LARGE SCALE GENOMIC DNA]</scope>
    <source>
        <strain>ATCC BAA-871 / DC3000</strain>
    </source>
</reference>
<protein>
    <recommendedName>
        <fullName>Alginate biosynthesis protein AlgF</fullName>
    </recommendedName>
</protein>
<evidence type="ECO:0000250" key="1"/>
<evidence type="ECO:0000255" key="2"/>
<evidence type="ECO:0000305" key="3"/>
<organism>
    <name type="scientific">Pseudomonas syringae pv. tomato (strain ATCC BAA-871 / DC3000)</name>
    <dbReference type="NCBI Taxonomy" id="223283"/>
    <lineage>
        <taxon>Bacteria</taxon>
        <taxon>Pseudomonadati</taxon>
        <taxon>Pseudomonadota</taxon>
        <taxon>Gammaproteobacteria</taxon>
        <taxon>Pseudomonadales</taxon>
        <taxon>Pseudomonadaceae</taxon>
        <taxon>Pseudomonas</taxon>
    </lineage>
</organism>
<proteinExistence type="inferred from homology"/>
<sequence length="222" mass="23320">MTSNNTAHRSATKRLFKTCALAAGLGLMSLPAFAGDSALYGPTAPKGSTFVRVYNASSAEISASVGNTNLNEVAPLGSTAFSFMPQGDYTAKLGSQSVPVKLASDHYYTLVNNASGKPQLVEEPPFKNKQKSLVRVQNLSDKSLTLKTADGKTEVVNTVAAKGTGEREINPVKVSLALYDGDKKVTDVKPVALERGEAAVLYITGSGSSLSPVWVKPPVATR</sequence>
<accession>Q887Q8</accession>
<gene>
    <name type="primary">algF</name>
    <name type="ordered locus">PSPTO_1233</name>
</gene>
<keyword id="KW-0016">Alginate biosynthesis</keyword>
<keyword id="KW-0574">Periplasm</keyword>
<keyword id="KW-1185">Reference proteome</keyword>
<keyword id="KW-0732">Signal</keyword>
<comment type="function">
    <text evidence="1">Together with AlgI and AlgJ, forms an inner membrane complex which probably interacts with the alginate polymerization-transport complex and adds acetyl groups at the O-2 and O-3 positions of mannuronate residues. Acetylation of alginate is important for the architecture of biofilms and increases the ability of alginate to act as a defense barrier (By similarity).</text>
</comment>
<comment type="pathway">
    <text>Glycan biosynthesis; alginate biosynthesis.</text>
</comment>
<comment type="subcellular location">
    <subcellularLocation>
        <location evidence="1">Periplasm</location>
    </subcellularLocation>
</comment>
<comment type="similarity">
    <text evidence="3">Belongs to the AlgF family.</text>
</comment>
<name>ALGF_PSESM</name>
<feature type="signal peptide" evidence="2">
    <location>
        <begin position="1"/>
        <end position="34"/>
    </location>
</feature>
<feature type="chain" id="PRO_0000001118" description="Alginate biosynthesis protein AlgF">
    <location>
        <begin position="35"/>
        <end position="222"/>
    </location>
</feature>
<dbReference type="EMBL" id="AE016853">
    <property type="protein sequence ID" value="AAO54758.1"/>
    <property type="molecule type" value="Genomic_DNA"/>
</dbReference>
<dbReference type="RefSeq" id="NP_791063.1">
    <property type="nucleotide sequence ID" value="NC_004578.1"/>
</dbReference>
<dbReference type="RefSeq" id="WP_003376052.1">
    <property type="nucleotide sequence ID" value="NC_004578.1"/>
</dbReference>
<dbReference type="SMR" id="Q887Q8"/>
<dbReference type="STRING" id="223283.PSPTO_1233"/>
<dbReference type="GeneID" id="1182869"/>
<dbReference type="KEGG" id="pst:PSPTO_1233"/>
<dbReference type="PATRIC" id="fig|223283.9.peg.1254"/>
<dbReference type="eggNOG" id="ENOG5032T05">
    <property type="taxonomic scope" value="Bacteria"/>
</dbReference>
<dbReference type="HOGENOM" id="CLU_112428_0_0_6"/>
<dbReference type="OrthoDB" id="7000405at2"/>
<dbReference type="PhylomeDB" id="Q887Q8"/>
<dbReference type="UniPathway" id="UPA00286"/>
<dbReference type="Proteomes" id="UP000002515">
    <property type="component" value="Chromosome"/>
</dbReference>
<dbReference type="GO" id="GO:0042597">
    <property type="term" value="C:periplasmic space"/>
    <property type="evidence" value="ECO:0007669"/>
    <property type="project" value="UniProtKB-SubCell"/>
</dbReference>
<dbReference type="GO" id="GO:0042121">
    <property type="term" value="P:alginic acid biosynthetic process"/>
    <property type="evidence" value="ECO:0007669"/>
    <property type="project" value="UniProtKB-UniPathway"/>
</dbReference>
<dbReference type="InterPro" id="IPR035422">
    <property type="entry name" value="AlgF"/>
</dbReference>
<dbReference type="Pfam" id="PF11182">
    <property type="entry name" value="AlgF"/>
    <property type="match status" value="1"/>
</dbReference>